<organism>
    <name type="scientific">Influenza A virus (strain A/Beijing/39/1975 H3N2)</name>
    <dbReference type="NCBI Taxonomy" id="383596"/>
    <lineage>
        <taxon>Viruses</taxon>
        <taxon>Riboviria</taxon>
        <taxon>Orthornavirae</taxon>
        <taxon>Negarnaviricota</taxon>
        <taxon>Polyploviricotina</taxon>
        <taxon>Insthoviricetes</taxon>
        <taxon>Articulavirales</taxon>
        <taxon>Orthomyxoviridae</taxon>
        <taxon>Alphainfluenzavirus</taxon>
        <taxon>Alphainfluenzavirus influenzae</taxon>
        <taxon>Influenza A virus</taxon>
    </lineage>
</organism>
<name>NS1_I75A0</name>
<comment type="function">
    <text evidence="1">Inhibits post-transcriptional processing of cellular pre-mRNA, by binding and inhibiting two cellular proteins that are required for the 3'-end processing of cellular pre-mRNAs: the 30 kDa cleavage and polyadenylation specificity factor/CPSF4 and the poly(A)-binding protein 2/PABPN1. In turn, unprocessed 3' end pre-mRNAs accumulate in the host nucleus and are no longer exported to the cytoplasm. Cellular protein synthesis is thereby shut off very early after virus infection. Viral protein synthesis is not affected by the inhibition of the cellular 3' end processing machinery because the poly(A) tails of viral mRNAs are produced by the viral polymerase through a stuttering mechanism. Prevents the establishment of the cellular antiviral state by inhibiting TRIM25-mediated RIGI ubiquitination, which normally triggers the antiviral transduction signal that leads to the activation of type I IFN genes by transcription factors IRF3 and IRF7. Also binds poly(A) and U6 snRNA. Inhibits the integrated stress response (ISR) in the infected cell by blocking dsRNA binding by EIF2AK2/PKR and further phosphorylation of EIF2S1/EIF-2ALPHA. Stress granule formation is thus inhibited, which allows protein synthesis and viral replication.</text>
</comment>
<comment type="subunit">
    <text evidence="1">Homodimer. Interacts with host TRIM25 (via coiled coil); this interaction specifically inhibits TRIM25 multimerization and TRIM25-mediated RIGI CARD ubiquitination. Interacts with human EIF2AK2/PKR, CPSF4, IVNS1ABP and PABPN1.</text>
</comment>
<comment type="subcellular location">
    <subcellularLocation>
        <location evidence="1">Host nucleus</location>
    </subcellularLocation>
    <subcellularLocation>
        <location evidence="1">Host cytoplasm</location>
    </subcellularLocation>
    <text evidence="1">In uninfected, transfected cells, NS1 is localized in the nucleus. Only in virus infected cells, the nuclear export signal is unveiled, presumably by a viral protein, and a fraction of NS1 is exported in the cytoplasm.</text>
</comment>
<comment type="alternative products">
    <event type="alternative splicing"/>
    <isoform>
        <id>Q30NP5-1</id>
        <name>NS1</name>
        <sequence type="displayed"/>
    </isoform>
    <isoform>
        <id>Q30NP6-1</id>
        <name>NEP</name>
        <name>NS2</name>
        <sequence type="external"/>
    </isoform>
</comment>
<comment type="domain">
    <text evidence="1">The dsRNA-binding region is required for suppression of RNA silencing.</text>
</comment>
<comment type="PTM">
    <text evidence="1">Upon interferon induction, ISGylated via host HERC5; this results in the impairment of NS1 interaction with RNA targets due to its inability to form homodimers and to interact with host EIF2AK2/PKR.</text>
</comment>
<comment type="similarity">
    <text evidence="1">Belongs to the influenza A viruses NS1 family.</text>
</comment>
<accession>Q30NP5</accession>
<keyword id="KW-0025">Alternative splicing</keyword>
<keyword id="KW-1262">Eukaryotic host gene expression shutoff by virus</keyword>
<keyword id="KW-1035">Host cytoplasm</keyword>
<keyword id="KW-1190">Host gene expression shutoff by virus</keyword>
<keyword id="KW-1192">Host mRNA suppression by virus</keyword>
<keyword id="KW-1048">Host nucleus</keyword>
<keyword id="KW-0945">Host-virus interaction</keyword>
<keyword id="KW-1090">Inhibition of host innate immune response by virus</keyword>
<keyword id="KW-1114">Inhibition of host interferon signaling pathway by virus</keyword>
<keyword id="KW-1102">Inhibition of host PKR by virus</keyword>
<keyword id="KW-1103">Inhibition of host pre-mRNA processing by virus</keyword>
<keyword id="KW-1088">Inhibition of host RIG-I by virus</keyword>
<keyword id="KW-1113">Inhibition of host RLR pathway by virus</keyword>
<keyword id="KW-0922">Interferon antiviral system evasion</keyword>
<keyword id="KW-0694">RNA-binding</keyword>
<keyword id="KW-0832">Ubl conjugation</keyword>
<keyword id="KW-0899">Viral immunoevasion</keyword>
<gene>
    <name evidence="1" type="primary">NS</name>
</gene>
<protein>
    <recommendedName>
        <fullName evidence="1">Non-structural protein 1</fullName>
        <shortName evidence="1">NS1</shortName>
    </recommendedName>
    <alternativeName>
        <fullName evidence="1">NS1A</fullName>
    </alternativeName>
</protein>
<proteinExistence type="inferred from homology"/>
<sequence length="237" mass="26697">MDSNTVSSFQVDCFLWHVRKQIVDQELGDAPFLDRLRRDQKSLRGRGSTLGLDIEAATHVGKQIVEKILKEESDEALTMTMASTPASRYITDMTTEELSRDWFMLMPKQKVEGPLCIRIDQAIMDKNIMLKANFSVIFDRLETLISLRAFTEEGAIVGEISPLPSFPGHTIEDVKNAIGVLIGGLEWNDNTVRVSKTLQRFAWGSSNENGGPPLTPKQKRKMARTARSKVRRDKMAD</sequence>
<feature type="chain" id="PRO_0000324255" description="Non-structural protein 1">
    <location>
        <begin position="1"/>
        <end position="237"/>
    </location>
</feature>
<feature type="region of interest" description="RNA-binding and homodimerization" evidence="1">
    <location>
        <begin position="1"/>
        <end position="73"/>
    </location>
</feature>
<feature type="region of interest" description="CPSF4-binding" evidence="1">
    <location>
        <begin position="180"/>
        <end position="215"/>
    </location>
</feature>
<feature type="region of interest" description="Disordered" evidence="2">
    <location>
        <begin position="205"/>
        <end position="237"/>
    </location>
</feature>
<feature type="region of interest" description="PABPN1-binding" evidence="1">
    <location>
        <begin position="223"/>
        <end position="230"/>
    </location>
</feature>
<feature type="short sequence motif" description="Nuclear localization signal" evidence="1">
    <location>
        <begin position="34"/>
        <end position="38"/>
    </location>
</feature>
<feature type="short sequence motif" description="Nuclear export signal" evidence="1">
    <location>
        <begin position="137"/>
        <end position="146"/>
    </location>
</feature>
<feature type="compositionally biased region" description="Basic residues" evidence="2">
    <location>
        <begin position="217"/>
        <end position="237"/>
    </location>
</feature>
<organismHost>
    <name type="scientific">Aves</name>
    <dbReference type="NCBI Taxonomy" id="8782"/>
</organismHost>
<organismHost>
    <name type="scientific">Cetacea</name>
    <name type="common">whales</name>
    <dbReference type="NCBI Taxonomy" id="9721"/>
</organismHost>
<organismHost>
    <name type="scientific">Homo sapiens</name>
    <name type="common">Human</name>
    <dbReference type="NCBI Taxonomy" id="9606"/>
</organismHost>
<organismHost>
    <name type="scientific">Phocidae</name>
    <name type="common">true seals</name>
    <dbReference type="NCBI Taxonomy" id="9709"/>
</organismHost>
<organismHost>
    <name type="scientific">Sus scrofa</name>
    <name type="common">Pig</name>
    <dbReference type="NCBI Taxonomy" id="9823"/>
</organismHost>
<dbReference type="EMBL" id="CY006048">
    <property type="protein sequence ID" value="ABB46397.1"/>
    <property type="molecule type" value="Genomic_RNA"/>
</dbReference>
<dbReference type="SMR" id="Q30NP5"/>
<dbReference type="Proteomes" id="UP000000827">
    <property type="component" value="Genome"/>
</dbReference>
<dbReference type="GO" id="GO:0030430">
    <property type="term" value="C:host cell cytoplasm"/>
    <property type="evidence" value="ECO:0007669"/>
    <property type="project" value="UniProtKB-SubCell"/>
</dbReference>
<dbReference type="GO" id="GO:0042025">
    <property type="term" value="C:host cell nucleus"/>
    <property type="evidence" value="ECO:0007669"/>
    <property type="project" value="UniProtKB-SubCell"/>
</dbReference>
<dbReference type="GO" id="GO:0030291">
    <property type="term" value="F:protein serine/threonine kinase inhibitor activity"/>
    <property type="evidence" value="ECO:0007669"/>
    <property type="project" value="UniProtKB-KW"/>
</dbReference>
<dbReference type="GO" id="GO:0003723">
    <property type="term" value="F:RNA binding"/>
    <property type="evidence" value="ECO:0007669"/>
    <property type="project" value="UniProtKB-KW"/>
</dbReference>
<dbReference type="GO" id="GO:0039540">
    <property type="term" value="P:symbiont-mediated suppression of host cytoplasmic pattern recognition receptor signaling pathway via inhibition of RIG-I activity"/>
    <property type="evidence" value="ECO:0007669"/>
    <property type="project" value="UniProtKB-KW"/>
</dbReference>
<dbReference type="GO" id="GO:0039657">
    <property type="term" value="P:symbiont-mediated suppression of host gene expression"/>
    <property type="evidence" value="ECO:0007669"/>
    <property type="project" value="UniProtKB-KW"/>
</dbReference>
<dbReference type="GO" id="GO:0039524">
    <property type="term" value="P:symbiont-mediated suppression of host mRNA processing"/>
    <property type="evidence" value="ECO:0007669"/>
    <property type="project" value="UniProtKB-KW"/>
</dbReference>
<dbReference type="GO" id="GO:0039580">
    <property type="term" value="P:symbiont-mediated suppression of host PKR/eIFalpha signaling"/>
    <property type="evidence" value="ECO:0007669"/>
    <property type="project" value="UniProtKB-KW"/>
</dbReference>
<dbReference type="GO" id="GO:0039502">
    <property type="term" value="P:symbiont-mediated suppression of host type I interferon-mediated signaling pathway"/>
    <property type="evidence" value="ECO:0007669"/>
    <property type="project" value="UniProtKB-KW"/>
</dbReference>
<dbReference type="FunFam" id="1.10.287.10:FF:000001">
    <property type="entry name" value="Non-structural protein 1"/>
    <property type="match status" value="1"/>
</dbReference>
<dbReference type="FunFam" id="3.30.420.330:FF:000001">
    <property type="entry name" value="Non-structural protein 1"/>
    <property type="match status" value="1"/>
</dbReference>
<dbReference type="Gene3D" id="3.30.420.330">
    <property type="entry name" value="Influenza virus non-structural protein, effector domain"/>
    <property type="match status" value="1"/>
</dbReference>
<dbReference type="Gene3D" id="1.10.287.10">
    <property type="entry name" value="S15/NS1, RNA-binding"/>
    <property type="match status" value="1"/>
</dbReference>
<dbReference type="HAMAP" id="MF_04066">
    <property type="entry name" value="INFV_NS1"/>
    <property type="match status" value="1"/>
</dbReference>
<dbReference type="InterPro" id="IPR004208">
    <property type="entry name" value="NS1"/>
</dbReference>
<dbReference type="InterPro" id="IPR000256">
    <property type="entry name" value="NS1A"/>
</dbReference>
<dbReference type="InterPro" id="IPR038064">
    <property type="entry name" value="NS1A_effect_dom-like_sf"/>
</dbReference>
<dbReference type="InterPro" id="IPR009068">
    <property type="entry name" value="uS15_NS1_RNA-bd_sf"/>
</dbReference>
<dbReference type="Pfam" id="PF00600">
    <property type="entry name" value="Flu_NS1"/>
    <property type="match status" value="1"/>
</dbReference>
<dbReference type="SUPFAM" id="SSF143021">
    <property type="entry name" value="Ns1 effector domain-like"/>
    <property type="match status" value="1"/>
</dbReference>
<dbReference type="SUPFAM" id="SSF47060">
    <property type="entry name" value="S15/NS1 RNA-binding domain"/>
    <property type="match status" value="1"/>
</dbReference>
<reference key="1">
    <citation type="submission" date="2005-11" db="EMBL/GenBank/DDBJ databases">
        <title>The NIAID influenza genome sequencing project.</title>
        <authorList>
            <person name="Ghedin E."/>
            <person name="Spiro D."/>
            <person name="Miller N."/>
            <person name="Zaborsky J."/>
            <person name="Feldblyum T."/>
            <person name="Subbu V."/>
            <person name="Shumway M."/>
            <person name="Sparenborg J."/>
            <person name="Groveman L."/>
            <person name="Halpin R."/>
            <person name="Sitz J."/>
            <person name="Koo H."/>
            <person name="Salzberg S.L."/>
            <person name="Webster R.G."/>
            <person name="Hoffmann E."/>
            <person name="Krauss S."/>
            <person name="Naeve C."/>
            <person name="Bao Y."/>
            <person name="Bolotov P."/>
            <person name="Dernovoy D."/>
            <person name="Kiryutin B."/>
            <person name="Lipman D.J."/>
            <person name="Tatusova T."/>
        </authorList>
    </citation>
    <scope>NUCLEOTIDE SEQUENCE [GENOMIC RNA]</scope>
</reference>
<evidence type="ECO:0000255" key="1">
    <source>
        <dbReference type="HAMAP-Rule" id="MF_04066"/>
    </source>
</evidence>
<evidence type="ECO:0000256" key="2">
    <source>
        <dbReference type="SAM" id="MobiDB-lite"/>
    </source>
</evidence>